<keyword id="KW-0084">Basement membrane</keyword>
<keyword id="KW-0106">Calcium</keyword>
<keyword id="KW-0186">Copper</keyword>
<keyword id="KW-0903">Direct protein sequencing</keyword>
<keyword id="KW-1015">Disulfide bond</keyword>
<keyword id="KW-0272">Extracellular matrix</keyword>
<keyword id="KW-0325">Glycoprotein</keyword>
<keyword id="KW-0479">Metal-binding</keyword>
<keyword id="KW-1185">Reference proteome</keyword>
<keyword id="KW-0964">Secreted</keyword>
<keyword id="KW-0732">Signal</keyword>
<reference key="1">
    <citation type="journal article" date="1988" name="FEBS Lett.">
        <title>Cloning and complete amino acid sequences of human and murine basement membrane protein BM-40 (SPARC, osteonectin).</title>
        <authorList>
            <person name="Lankat-Buttgereit B."/>
            <person name="Mann K."/>
            <person name="Deutzmann R."/>
            <person name="Timpl R."/>
            <person name="Krieg T."/>
        </authorList>
    </citation>
    <scope>NUCLEOTIDE SEQUENCE</scope>
    <scope>PARTIAL PROTEIN SEQUENCE</scope>
    <source>
        <tissue>Placenta</tissue>
    </source>
</reference>
<reference key="2">
    <citation type="journal article" date="1986" name="EMBO J.">
        <title>Evidence from molecular cloning that SPARC, a major product of mouse embryo parietal endoderm, is related to an endothelial cell 'culture shock' glycoprotein of Mr 43,000.</title>
        <authorList>
            <person name="Mason I.J."/>
            <person name="Taylor A."/>
            <person name="Williams J.G."/>
            <person name="Sage H."/>
            <person name="Hogan B.L.M."/>
        </authorList>
    </citation>
    <scope>NUCLEOTIDE SEQUENCE [MRNA]</scope>
</reference>
<reference key="3">
    <citation type="journal article" date="1988" name="J. Biol. Chem.">
        <title>Characterization of the mouse SPARC/osteonectin gene. Intron/exon organization and an unusual promoter region.</title>
        <authorList>
            <person name="McVey J.H."/>
            <person name="Nomura S."/>
            <person name="Kelly P."/>
            <person name="Mason I.J."/>
            <person name="Hogan B.L.M."/>
        </authorList>
    </citation>
    <scope>NUCLEOTIDE SEQUENCE [GENOMIC DNA]</scope>
</reference>
<reference key="4">
    <citation type="journal article" date="2004" name="Genome Res.">
        <title>The status, quality, and expansion of the NIH full-length cDNA project: the Mammalian Gene Collection (MGC).</title>
        <authorList>
            <consortium name="The MGC Project Team"/>
        </authorList>
    </citation>
    <scope>NUCLEOTIDE SEQUENCE [LARGE SCALE MRNA]</scope>
    <source>
        <strain>FVB/N</strain>
        <tissue>Mammary gland</tissue>
    </source>
</reference>
<reference key="5">
    <citation type="journal article" date="1987" name="FEBS Lett.">
        <title>Solubilization of protein BM-40 from a basement membrane tumor with chelating agents and evidence for its identity with osteonectin and SPARC.</title>
        <authorList>
            <person name="Mann K."/>
            <person name="Deutzmann R."/>
            <person name="Paulsson M."/>
            <person name="Timpl R."/>
        </authorList>
    </citation>
    <scope>PROTEIN SEQUENCE OF 18-37 AND 215-234</scope>
</reference>
<reference key="6">
    <citation type="journal article" date="1987" name="Biochemistry">
        <title>Calcium binding domains and calcium-induced conformational transition of SPARC/BM-40/osteonectin, an extracellular glycoprotein expressed in mineralized and nonmineralized tissues.</title>
        <authorList>
            <person name="Engel J."/>
            <person name="Taylor W."/>
            <person name="Paulsson M."/>
            <person name="Sage H."/>
            <person name="Hogan B.L.M."/>
        </authorList>
    </citation>
    <scope>GLYCOSYLATION</scope>
    <scope>CALCIUM-BINDING</scope>
    <scope>SUBCELLULAR LOCATION</scope>
</reference>
<reference key="7">
    <citation type="journal article" date="2010" name="Cell">
        <title>A tissue-specific atlas of mouse protein phosphorylation and expression.</title>
        <authorList>
            <person name="Huttlin E.L."/>
            <person name="Jedrychowski M.P."/>
            <person name="Elias J.E."/>
            <person name="Goswami T."/>
            <person name="Rad R."/>
            <person name="Beausoleil S.A."/>
            <person name="Villen J."/>
            <person name="Haas W."/>
            <person name="Sowa M.E."/>
            <person name="Gygi S.P."/>
        </authorList>
    </citation>
    <scope>IDENTIFICATION BY MASS SPECTROMETRY [LARGE SCALE ANALYSIS]</scope>
    <source>
        <tissue>Brain</tissue>
        <tissue>Brown adipose tissue</tissue>
        <tissue>Heart</tissue>
        <tissue>Lung</tissue>
        <tissue>Pancreas</tissue>
        <tissue>Spleen</tissue>
        <tissue>Testis</tissue>
    </source>
</reference>
<proteinExistence type="evidence at protein level"/>
<name>SPRC_MOUSE</name>
<protein>
    <recommendedName>
        <fullName>SPARC</fullName>
    </recommendedName>
    <alternativeName>
        <fullName>Basement-membrane protein 40</fullName>
        <shortName>BM-40</shortName>
    </alternativeName>
    <alternativeName>
        <fullName>Osteonectin</fullName>
        <shortName>ON</shortName>
    </alternativeName>
    <alternativeName>
        <fullName>Secreted protein acidic and rich in cysteine</fullName>
    </alternativeName>
</protein>
<dbReference type="EMBL" id="X04017">
    <property type="protein sequence ID" value="CAA27642.1"/>
    <property type="molecule type" value="mRNA"/>
</dbReference>
<dbReference type="EMBL" id="M20692">
    <property type="protein sequence ID" value="AAA40125.1"/>
    <property type="molecule type" value="Genomic_DNA"/>
</dbReference>
<dbReference type="EMBL" id="M20684">
    <property type="protein sequence ID" value="AAA40125.1"/>
    <property type="status" value="JOINED"/>
    <property type="molecule type" value="Genomic_DNA"/>
</dbReference>
<dbReference type="EMBL" id="M20685">
    <property type="protein sequence ID" value="AAA40125.1"/>
    <property type="status" value="JOINED"/>
    <property type="molecule type" value="Genomic_DNA"/>
</dbReference>
<dbReference type="EMBL" id="M20686">
    <property type="protein sequence ID" value="AAA40125.1"/>
    <property type="status" value="JOINED"/>
    <property type="molecule type" value="Genomic_DNA"/>
</dbReference>
<dbReference type="EMBL" id="M20687">
    <property type="protein sequence ID" value="AAA40125.1"/>
    <property type="status" value="JOINED"/>
    <property type="molecule type" value="Genomic_DNA"/>
</dbReference>
<dbReference type="EMBL" id="M20688">
    <property type="protein sequence ID" value="AAA40125.1"/>
    <property type="status" value="JOINED"/>
    <property type="molecule type" value="Genomic_DNA"/>
</dbReference>
<dbReference type="EMBL" id="M20689">
    <property type="protein sequence ID" value="AAA40125.1"/>
    <property type="status" value="JOINED"/>
    <property type="molecule type" value="Genomic_DNA"/>
</dbReference>
<dbReference type="EMBL" id="M20690">
    <property type="protein sequence ID" value="AAA40125.1"/>
    <property type="status" value="JOINED"/>
    <property type="molecule type" value="Genomic_DNA"/>
</dbReference>
<dbReference type="EMBL" id="M20691">
    <property type="protein sequence ID" value="AAA40125.1"/>
    <property type="status" value="JOINED"/>
    <property type="molecule type" value="Genomic_DNA"/>
</dbReference>
<dbReference type="EMBL" id="BC004638">
    <property type="protein sequence ID" value="AAH04638.1"/>
    <property type="molecule type" value="mRNA"/>
</dbReference>
<dbReference type="CCDS" id="CCDS24712.1"/>
<dbReference type="PIR" id="A29227">
    <property type="entry name" value="GEMSN"/>
</dbReference>
<dbReference type="RefSeq" id="NP_033268.1">
    <property type="nucleotide sequence ID" value="NM_009242.5"/>
</dbReference>
<dbReference type="SMR" id="P07214"/>
<dbReference type="BioGRID" id="203423">
    <property type="interactions" value="3"/>
</dbReference>
<dbReference type="FunCoup" id="P07214">
    <property type="interactions" value="359"/>
</dbReference>
<dbReference type="IntAct" id="P07214">
    <property type="interactions" value="3"/>
</dbReference>
<dbReference type="STRING" id="10090.ENSMUSP00000018737"/>
<dbReference type="GlyConnect" id="2736">
    <property type="glycosylation" value="9 N-Linked glycans (1 site)"/>
</dbReference>
<dbReference type="GlyCosmos" id="P07214">
    <property type="glycosylation" value="1 site, 9 glycans"/>
</dbReference>
<dbReference type="GlyGen" id="P07214">
    <property type="glycosylation" value="1 site, 10 N-linked glycans (1 site)"/>
</dbReference>
<dbReference type="iPTMnet" id="P07214"/>
<dbReference type="PhosphoSitePlus" id="P07214"/>
<dbReference type="SwissPalm" id="P07214"/>
<dbReference type="CPTAC" id="non-CPTAC-3394"/>
<dbReference type="jPOST" id="P07214"/>
<dbReference type="PaxDb" id="10090-ENSMUSP00000018737"/>
<dbReference type="PeptideAtlas" id="P07214"/>
<dbReference type="ProteomicsDB" id="263324"/>
<dbReference type="Pumba" id="P07214"/>
<dbReference type="Antibodypedia" id="878">
    <property type="antibodies" value="849 antibodies from 43 providers"/>
</dbReference>
<dbReference type="DNASU" id="20692"/>
<dbReference type="Ensembl" id="ENSMUST00000018737.13">
    <property type="protein sequence ID" value="ENSMUSP00000018737.7"/>
    <property type="gene ID" value="ENSMUSG00000018593.14"/>
</dbReference>
<dbReference type="Ensembl" id="ENSMUST00000214685.2">
    <property type="protein sequence ID" value="ENSMUSP00000151000.2"/>
    <property type="gene ID" value="ENSMUSG00000018593.14"/>
</dbReference>
<dbReference type="GeneID" id="20692"/>
<dbReference type="KEGG" id="mmu:20692"/>
<dbReference type="UCSC" id="uc007izh.3">
    <property type="organism name" value="mouse"/>
</dbReference>
<dbReference type="AGR" id="MGI:98373"/>
<dbReference type="CTD" id="6678"/>
<dbReference type="MGI" id="MGI:98373">
    <property type="gene designation" value="Sparc"/>
</dbReference>
<dbReference type="VEuPathDB" id="HostDB:ENSMUSG00000018593"/>
<dbReference type="eggNOG" id="KOG4004">
    <property type="taxonomic scope" value="Eukaryota"/>
</dbReference>
<dbReference type="GeneTree" id="ENSGT00510000046787"/>
<dbReference type="InParanoid" id="P07214"/>
<dbReference type="OrthoDB" id="15008at9989"/>
<dbReference type="PhylomeDB" id="P07214"/>
<dbReference type="TreeFam" id="TF319356"/>
<dbReference type="Reactome" id="R-MMU-114608">
    <property type="pathway name" value="Platelet degranulation"/>
</dbReference>
<dbReference type="Reactome" id="R-MMU-3000178">
    <property type="pathway name" value="ECM proteoglycans"/>
</dbReference>
<dbReference type="Reactome" id="R-MMU-3000497">
    <property type="pathway name" value="Scavenging by Class H Receptors"/>
</dbReference>
<dbReference type="BioGRID-ORCS" id="20692">
    <property type="hits" value="1 hit in 80 CRISPR screens"/>
</dbReference>
<dbReference type="ChiTaRS" id="Sparc">
    <property type="organism name" value="mouse"/>
</dbReference>
<dbReference type="PRO" id="PR:P07214"/>
<dbReference type="Proteomes" id="UP000000589">
    <property type="component" value="Chromosome 11"/>
</dbReference>
<dbReference type="RNAct" id="P07214">
    <property type="molecule type" value="protein"/>
</dbReference>
<dbReference type="Bgee" id="ENSMUSG00000018593">
    <property type="expression patterns" value="Expressed in vault of skull and 318 other cell types or tissues"/>
</dbReference>
<dbReference type="ExpressionAtlas" id="P07214">
    <property type="expression patterns" value="baseline and differential"/>
</dbReference>
<dbReference type="GO" id="GO:0005604">
    <property type="term" value="C:basement membrane"/>
    <property type="evidence" value="ECO:0007669"/>
    <property type="project" value="UniProtKB-SubCell"/>
</dbReference>
<dbReference type="GO" id="GO:0062023">
    <property type="term" value="C:collagen-containing extracellular matrix"/>
    <property type="evidence" value="ECO:0007005"/>
    <property type="project" value="BHF-UCL"/>
</dbReference>
<dbReference type="GO" id="GO:0031012">
    <property type="term" value="C:extracellular matrix"/>
    <property type="evidence" value="ECO:0000314"/>
    <property type="project" value="MGI"/>
</dbReference>
<dbReference type="GO" id="GO:0005615">
    <property type="term" value="C:extracellular space"/>
    <property type="evidence" value="ECO:0000314"/>
    <property type="project" value="CAFA"/>
</dbReference>
<dbReference type="GO" id="GO:0005509">
    <property type="term" value="F:calcium ion binding"/>
    <property type="evidence" value="ECO:0000314"/>
    <property type="project" value="CAFA"/>
</dbReference>
<dbReference type="GO" id="GO:0050840">
    <property type="term" value="F:extracellular matrix binding"/>
    <property type="evidence" value="ECO:0000314"/>
    <property type="project" value="MGI"/>
</dbReference>
<dbReference type="GO" id="GO:0060348">
    <property type="term" value="P:bone development"/>
    <property type="evidence" value="ECO:0000315"/>
    <property type="project" value="MGI"/>
</dbReference>
<dbReference type="GO" id="GO:0071363">
    <property type="term" value="P:cellular response to growth factor stimulus"/>
    <property type="evidence" value="ECO:0000314"/>
    <property type="project" value="MGI"/>
</dbReference>
<dbReference type="GO" id="GO:0043473">
    <property type="term" value="P:pigmentation"/>
    <property type="evidence" value="ECO:0000315"/>
    <property type="project" value="MGI"/>
</dbReference>
<dbReference type="GO" id="GO:0042127">
    <property type="term" value="P:regulation of cell population proliferation"/>
    <property type="evidence" value="ECO:0000316"/>
    <property type="project" value="MGI"/>
</dbReference>
<dbReference type="CDD" id="cd16235">
    <property type="entry name" value="EFh_SPARC_SPARC"/>
    <property type="match status" value="1"/>
</dbReference>
<dbReference type="CDD" id="cd01328">
    <property type="entry name" value="FSL_SPARC"/>
    <property type="match status" value="1"/>
</dbReference>
<dbReference type="FunFam" id="1.10.238.10:FF:000068">
    <property type="entry name" value="SPARC isoform 1"/>
    <property type="match status" value="1"/>
</dbReference>
<dbReference type="FunFam" id="3.30.60.30:FF:000004">
    <property type="entry name" value="SPARC isoform 1"/>
    <property type="match status" value="1"/>
</dbReference>
<dbReference type="Gene3D" id="3.30.60.30">
    <property type="match status" value="1"/>
</dbReference>
<dbReference type="Gene3D" id="1.10.238.10">
    <property type="entry name" value="EF-hand"/>
    <property type="match status" value="1"/>
</dbReference>
<dbReference type="InterPro" id="IPR011992">
    <property type="entry name" value="EF-hand-dom_pair"/>
</dbReference>
<dbReference type="InterPro" id="IPR018247">
    <property type="entry name" value="EF_Hand_1_Ca_BS"/>
</dbReference>
<dbReference type="InterPro" id="IPR003645">
    <property type="entry name" value="Fol_N"/>
</dbReference>
<dbReference type="InterPro" id="IPR015369">
    <property type="entry name" value="Follistatin/Osteonectin_EGF"/>
</dbReference>
<dbReference type="InterPro" id="IPR002350">
    <property type="entry name" value="Kazal_dom"/>
</dbReference>
<dbReference type="InterPro" id="IPR036058">
    <property type="entry name" value="Kazal_dom_sf"/>
</dbReference>
<dbReference type="InterPro" id="IPR001999">
    <property type="entry name" value="Osteonectin_CS"/>
</dbReference>
<dbReference type="InterPro" id="IPR019577">
    <property type="entry name" value="SPARC/Testican_Ca-bd-dom"/>
</dbReference>
<dbReference type="InterPro" id="IPR037641">
    <property type="entry name" value="SPARC_FS"/>
</dbReference>
<dbReference type="PANTHER" id="PTHR13866:SF6">
    <property type="entry name" value="SPARC"/>
    <property type="match status" value="1"/>
</dbReference>
<dbReference type="PANTHER" id="PTHR13866">
    <property type="entry name" value="SPARC OSTEONECTIN"/>
    <property type="match status" value="1"/>
</dbReference>
<dbReference type="Pfam" id="PF09289">
    <property type="entry name" value="FOLN"/>
    <property type="match status" value="1"/>
</dbReference>
<dbReference type="Pfam" id="PF00050">
    <property type="entry name" value="Kazal_1"/>
    <property type="match status" value="1"/>
</dbReference>
<dbReference type="Pfam" id="PF10591">
    <property type="entry name" value="SPARC_Ca_bdg"/>
    <property type="match status" value="1"/>
</dbReference>
<dbReference type="SMART" id="SM00274">
    <property type="entry name" value="FOLN"/>
    <property type="match status" value="1"/>
</dbReference>
<dbReference type="SMART" id="SM00280">
    <property type="entry name" value="KAZAL"/>
    <property type="match status" value="1"/>
</dbReference>
<dbReference type="SUPFAM" id="SSF47473">
    <property type="entry name" value="EF-hand"/>
    <property type="match status" value="1"/>
</dbReference>
<dbReference type="SUPFAM" id="SSF57196">
    <property type="entry name" value="EGF/Laminin"/>
    <property type="match status" value="1"/>
</dbReference>
<dbReference type="SUPFAM" id="SSF100895">
    <property type="entry name" value="Kazal-type serine protease inhibitors"/>
    <property type="match status" value="1"/>
</dbReference>
<dbReference type="PROSITE" id="PS00018">
    <property type="entry name" value="EF_HAND_1"/>
    <property type="match status" value="1"/>
</dbReference>
<dbReference type="PROSITE" id="PS51465">
    <property type="entry name" value="KAZAL_2"/>
    <property type="match status" value="1"/>
</dbReference>
<dbReference type="PROSITE" id="PS00612">
    <property type="entry name" value="OSTEONECTIN_1"/>
    <property type="match status" value="1"/>
</dbReference>
<dbReference type="PROSITE" id="PS00613">
    <property type="entry name" value="OSTEONECTIN_2"/>
    <property type="match status" value="1"/>
</dbReference>
<organism>
    <name type="scientific">Mus musculus</name>
    <name type="common">Mouse</name>
    <dbReference type="NCBI Taxonomy" id="10090"/>
    <lineage>
        <taxon>Eukaryota</taxon>
        <taxon>Metazoa</taxon>
        <taxon>Chordata</taxon>
        <taxon>Craniata</taxon>
        <taxon>Vertebrata</taxon>
        <taxon>Euteleostomi</taxon>
        <taxon>Mammalia</taxon>
        <taxon>Eutheria</taxon>
        <taxon>Euarchontoglires</taxon>
        <taxon>Glires</taxon>
        <taxon>Rodentia</taxon>
        <taxon>Myomorpha</taxon>
        <taxon>Muroidea</taxon>
        <taxon>Muridae</taxon>
        <taxon>Murinae</taxon>
        <taxon>Mus</taxon>
        <taxon>Mus</taxon>
    </lineage>
</organism>
<evidence type="ECO:0000255" key="1">
    <source>
        <dbReference type="PROSITE-ProRule" id="PRU00798"/>
    </source>
</evidence>
<evidence type="ECO:0000255" key="2">
    <source>
        <dbReference type="PROSITE-ProRule" id="PRU10142"/>
    </source>
</evidence>
<evidence type="ECO:0000269" key="3">
    <source>
    </source>
</evidence>
<evidence type="ECO:0000269" key="4">
    <source>
    </source>
</evidence>
<evidence type="ECO:0000305" key="5"/>
<evidence type="ECO:0000305" key="6">
    <source>
    </source>
</evidence>
<sequence length="302" mass="34450">MRAWIFFLLCLAGRALAAPQQTEVAEEIVEEETVVEETGVPVGANPVQVEMGEFEDGAEETVEEVVADNPCQNHHCKHGKVCELDESNTPMCVCQDPTSCPAPIGEFEKVCSNDNKTFDSSCHFFATKCTLEGTKKGHKLHLDYIGPCKYIAPCLDSELTEFPLRMRDWLKNVLVTLYERDEGNNLLTEKQKLRVKKIHENEKRLEAGDHPVELLARDFEKNYNMYIFPVHWQFGQLDQHPIDGYLSHTELAPLRAPLIPMEHCTTRFFETCDLDNDKYIALEEWAGCFGIKEQDINKDLVI</sequence>
<feature type="signal peptide" evidence="3">
    <location>
        <begin position="1"/>
        <end position="17"/>
    </location>
</feature>
<feature type="chain" id="PRO_0000020305" description="SPARC">
    <location>
        <begin position="18"/>
        <end position="302"/>
    </location>
</feature>
<feature type="domain" description="Follistatin-like">
    <location>
        <begin position="70"/>
        <end position="92"/>
    </location>
</feature>
<feature type="domain" description="Kazal-like" evidence="1">
    <location>
        <begin position="88"/>
        <end position="150"/>
    </location>
</feature>
<feature type="domain" description="EF-hand">
    <location>
        <begin position="260"/>
        <end position="295"/>
    </location>
</feature>
<feature type="binding site" evidence="2">
    <location>
        <position position="273"/>
    </location>
    <ligand>
        <name>Ca(2+)</name>
        <dbReference type="ChEBI" id="CHEBI:29108"/>
    </ligand>
</feature>
<feature type="binding site" evidence="2">
    <location>
        <position position="275"/>
    </location>
    <ligand>
        <name>Ca(2+)</name>
        <dbReference type="ChEBI" id="CHEBI:29108"/>
    </ligand>
</feature>
<feature type="binding site" evidence="2">
    <location>
        <position position="277"/>
    </location>
    <ligand>
        <name>Ca(2+)</name>
        <dbReference type="ChEBI" id="CHEBI:29108"/>
    </ligand>
</feature>
<feature type="binding site" evidence="2">
    <location>
        <position position="279"/>
    </location>
    <ligand>
        <name>Ca(2+)</name>
        <dbReference type="ChEBI" id="CHEBI:29108"/>
    </ligand>
</feature>
<feature type="binding site" evidence="2">
    <location>
        <position position="284"/>
    </location>
    <ligand>
        <name>Ca(2+)</name>
        <dbReference type="ChEBI" id="CHEBI:29108"/>
    </ligand>
</feature>
<feature type="glycosylation site" description="N-linked (GlcNAc...) asparagine" evidence="6">
    <location>
        <position position="115"/>
    </location>
</feature>
<feature type="disulfide bond" evidence="1">
    <location>
        <begin position="71"/>
        <end position="82"/>
    </location>
</feature>
<feature type="disulfide bond" evidence="1">
    <location>
        <begin position="76"/>
        <end position="92"/>
    </location>
</feature>
<feature type="disulfide bond" evidence="1">
    <location>
        <begin position="94"/>
        <end position="129"/>
    </location>
</feature>
<feature type="disulfide bond" evidence="1">
    <location>
        <begin position="100"/>
        <end position="122"/>
    </location>
</feature>
<feature type="disulfide bond" evidence="1">
    <location>
        <begin position="111"/>
        <end position="148"/>
    </location>
</feature>
<feature type="disulfide bond">
    <location>
        <begin position="154"/>
        <end position="264"/>
    </location>
</feature>
<feature type="disulfide bond">
    <location>
        <begin position="272"/>
        <end position="288"/>
    </location>
</feature>
<accession>P07214</accession>
<gene>
    <name type="primary">Sparc</name>
</gene>
<comment type="function">
    <text>Appears to regulate cell growth through interactions with the extracellular matrix and cytokines. Binds calcium and copper, several types of collagen, albumin, thrombospondin, PDGF and cell membranes. There are two calcium binding sites; an acidic domain that binds 5 to 8 Ca(2+) with a low affinity and an EF-hand loop that binds a Ca(2+) ion with a high affinity.</text>
</comment>
<comment type="subcellular location">
    <subcellularLocation>
        <location evidence="4">Secreted</location>
        <location evidence="4">Extracellular space</location>
        <location evidence="4">Extracellular matrix</location>
        <location evidence="4">Basement membrane</location>
    </subcellularLocation>
    <text>In or around the basement membrane.</text>
</comment>
<comment type="developmental stage">
    <text>Expressed at high levels in tissues undergoing morphogenesis, remodeling and wound repair.</text>
</comment>
<comment type="PTM">
    <text evidence="4">N-glycosylated.</text>
</comment>
<comment type="similarity">
    <text evidence="5">Belongs to the SPARC family.</text>
</comment>